<accession>B5FAD9</accession>
<comment type="catalytic activity">
    <reaction evidence="1">
        <text>L-cysteine + L-glutamate + ATP = gamma-L-glutamyl-L-cysteine + ADP + phosphate + H(+)</text>
        <dbReference type="Rhea" id="RHEA:13285"/>
        <dbReference type="ChEBI" id="CHEBI:15378"/>
        <dbReference type="ChEBI" id="CHEBI:29985"/>
        <dbReference type="ChEBI" id="CHEBI:30616"/>
        <dbReference type="ChEBI" id="CHEBI:35235"/>
        <dbReference type="ChEBI" id="CHEBI:43474"/>
        <dbReference type="ChEBI" id="CHEBI:58173"/>
        <dbReference type="ChEBI" id="CHEBI:456216"/>
        <dbReference type="EC" id="6.3.2.2"/>
    </reaction>
</comment>
<comment type="pathway">
    <text evidence="1">Sulfur metabolism; glutathione biosynthesis; glutathione from L-cysteine and L-glutamate: step 1/2.</text>
</comment>
<comment type="similarity">
    <text evidence="1">Belongs to the glutamate--cysteine ligase type 1 family. Type 1 subfamily.</text>
</comment>
<organism>
    <name type="scientific">Aliivibrio fischeri (strain MJ11)</name>
    <name type="common">Vibrio fischeri</name>
    <dbReference type="NCBI Taxonomy" id="388396"/>
    <lineage>
        <taxon>Bacteria</taxon>
        <taxon>Pseudomonadati</taxon>
        <taxon>Pseudomonadota</taxon>
        <taxon>Gammaproteobacteria</taxon>
        <taxon>Vibrionales</taxon>
        <taxon>Vibrionaceae</taxon>
        <taxon>Aliivibrio</taxon>
    </lineage>
</organism>
<dbReference type="EC" id="6.3.2.2" evidence="1"/>
<dbReference type="EMBL" id="CP001139">
    <property type="protein sequence ID" value="ACH65188.1"/>
    <property type="molecule type" value="Genomic_DNA"/>
</dbReference>
<dbReference type="RefSeq" id="WP_012532880.1">
    <property type="nucleotide sequence ID" value="NC_011184.1"/>
</dbReference>
<dbReference type="SMR" id="B5FAD9"/>
<dbReference type="KEGG" id="vfm:VFMJ11_0555"/>
<dbReference type="HOGENOM" id="CLU_020728_3_0_6"/>
<dbReference type="UniPathway" id="UPA00142">
    <property type="reaction ID" value="UER00209"/>
</dbReference>
<dbReference type="Proteomes" id="UP000001857">
    <property type="component" value="Chromosome I"/>
</dbReference>
<dbReference type="GO" id="GO:0005829">
    <property type="term" value="C:cytosol"/>
    <property type="evidence" value="ECO:0007669"/>
    <property type="project" value="TreeGrafter"/>
</dbReference>
<dbReference type="GO" id="GO:0005524">
    <property type="term" value="F:ATP binding"/>
    <property type="evidence" value="ECO:0007669"/>
    <property type="project" value="UniProtKB-KW"/>
</dbReference>
<dbReference type="GO" id="GO:0004357">
    <property type="term" value="F:glutamate-cysteine ligase activity"/>
    <property type="evidence" value="ECO:0007669"/>
    <property type="project" value="UniProtKB-UniRule"/>
</dbReference>
<dbReference type="GO" id="GO:0046872">
    <property type="term" value="F:metal ion binding"/>
    <property type="evidence" value="ECO:0007669"/>
    <property type="project" value="TreeGrafter"/>
</dbReference>
<dbReference type="GO" id="GO:0006750">
    <property type="term" value="P:glutathione biosynthetic process"/>
    <property type="evidence" value="ECO:0007669"/>
    <property type="project" value="UniProtKB-UniRule"/>
</dbReference>
<dbReference type="Gene3D" id="3.30.590.20">
    <property type="match status" value="1"/>
</dbReference>
<dbReference type="HAMAP" id="MF_00578">
    <property type="entry name" value="Glu_cys_ligase"/>
    <property type="match status" value="1"/>
</dbReference>
<dbReference type="InterPro" id="IPR014746">
    <property type="entry name" value="Gln_synth/guanido_kin_cat_dom"/>
</dbReference>
<dbReference type="InterPro" id="IPR007370">
    <property type="entry name" value="Glu_cys_ligase"/>
</dbReference>
<dbReference type="InterPro" id="IPR006334">
    <property type="entry name" value="Glut_cys_ligase"/>
</dbReference>
<dbReference type="NCBIfam" id="TIGR01434">
    <property type="entry name" value="glu_cys_ligase"/>
    <property type="match status" value="1"/>
</dbReference>
<dbReference type="PANTHER" id="PTHR38761">
    <property type="entry name" value="GLUTAMATE--CYSTEINE LIGASE"/>
    <property type="match status" value="1"/>
</dbReference>
<dbReference type="PANTHER" id="PTHR38761:SF1">
    <property type="entry name" value="GLUTAMATE--CYSTEINE LIGASE"/>
    <property type="match status" value="1"/>
</dbReference>
<dbReference type="Pfam" id="PF04262">
    <property type="entry name" value="Glu_cys_ligase"/>
    <property type="match status" value="1"/>
</dbReference>
<dbReference type="SUPFAM" id="SSF55931">
    <property type="entry name" value="Glutamine synthetase/guanido kinase"/>
    <property type="match status" value="1"/>
</dbReference>
<proteinExistence type="inferred from homology"/>
<gene>
    <name evidence="1" type="primary">gshA</name>
    <name type="ordered locus">VFMJ11_0555</name>
</gene>
<sequence>MTEFINRLQKVASNPNAFKKTGRGIERETLRFTPGASLSTKPHPEGVGSALTHKYITTDFAESLLEFITPVSNDVDTVLKQLEDVHHYTVSHMGDEKLWPLSMPCFVTHDDDITLAQYGESNVGKLKTTYREGLKRRYGSVMQVISGVHFNFSFSTEFWDELFGEQSEDQRKESVSDAYFALIRNYYRFGWLIPYFFGASPALCSSFIQGRETSMDFESLGKTYYLPYATSLRLSDLGYTNDAQSNLKISLNSVNEYVDGLNKAIRTPSEEFAKIGLKEGDKHIQLNSNVLQIENELYAPIRPKRVAKSGERPSEALERDGVEYIEVRSLDVNPYSPIGVNEDQVRFLDMFLTWTVLSDSAPMNDSEMACWKDNWNKIIEKGRKPGLELKIGCQGERLTQKAWAERVFEDLLIIAKEMDRVNGDDAYQQTHKRLSAMIDDPELTISGRLLAETKAAGGIGVIGCKLAVEHRETHLAHQYRFYTKQELDTEVERSVQAQKEIEANDKLSFSEYLEEYFSYLK</sequence>
<keyword id="KW-0067">ATP-binding</keyword>
<keyword id="KW-0317">Glutathione biosynthesis</keyword>
<keyword id="KW-0436">Ligase</keyword>
<keyword id="KW-0547">Nucleotide-binding</keyword>
<evidence type="ECO:0000255" key="1">
    <source>
        <dbReference type="HAMAP-Rule" id="MF_00578"/>
    </source>
</evidence>
<name>GSH1_ALIFM</name>
<protein>
    <recommendedName>
        <fullName evidence="1">Glutamate--cysteine ligase</fullName>
        <ecNumber evidence="1">6.3.2.2</ecNumber>
    </recommendedName>
    <alternativeName>
        <fullName evidence="1">Gamma-ECS</fullName>
        <shortName evidence="1">GCS</shortName>
    </alternativeName>
    <alternativeName>
        <fullName evidence="1">Gamma-glutamylcysteine synthetase</fullName>
    </alternativeName>
</protein>
<reference key="1">
    <citation type="submission" date="2008-08" db="EMBL/GenBank/DDBJ databases">
        <title>Complete sequence of Vibrio fischeri strain MJ11.</title>
        <authorList>
            <person name="Mandel M.J."/>
            <person name="Stabb E.V."/>
            <person name="Ruby E.G."/>
            <person name="Ferriera S."/>
            <person name="Johnson J."/>
            <person name="Kravitz S."/>
            <person name="Beeson K."/>
            <person name="Sutton G."/>
            <person name="Rogers Y.-H."/>
            <person name="Friedman R."/>
            <person name="Frazier M."/>
            <person name="Venter J.C."/>
        </authorList>
    </citation>
    <scope>NUCLEOTIDE SEQUENCE [LARGE SCALE GENOMIC DNA]</scope>
    <source>
        <strain>MJ11</strain>
    </source>
</reference>
<feature type="chain" id="PRO_1000129610" description="Glutamate--cysteine ligase">
    <location>
        <begin position="1"/>
        <end position="521"/>
    </location>
</feature>